<proteinExistence type="evidence at protein level"/>
<dbReference type="EMBL" id="AY358244">
    <property type="protein sequence ID" value="AAQ88611.1"/>
    <property type="molecule type" value="mRNA"/>
</dbReference>
<dbReference type="EMBL" id="AK123938">
    <property type="protein sequence ID" value="BAC85731.1"/>
    <property type="molecule type" value="mRNA"/>
</dbReference>
<dbReference type="EMBL" id="AL136139">
    <property type="status" value="NOT_ANNOTATED_CDS"/>
    <property type="molecule type" value="Genomic_DNA"/>
</dbReference>
<dbReference type="EMBL" id="BC068585">
    <property type="protein sequence ID" value="AAH68585.1"/>
    <property type="molecule type" value="mRNA"/>
</dbReference>
<dbReference type="CCDS" id="CCDS4519.1"/>
<dbReference type="RefSeq" id="NP_997465.1">
    <property type="nucleotide sequence ID" value="NM_207582.3"/>
</dbReference>
<dbReference type="PDB" id="1Y4M">
    <property type="method" value="X-ray"/>
    <property type="resolution" value="1.60 A"/>
    <property type="chains" value="A/B/C=391-443"/>
</dbReference>
<dbReference type="PDB" id="6RX3">
    <property type="method" value="X-ray"/>
    <property type="resolution" value="2.20 A"/>
    <property type="chains" value="A/B/C=375-468"/>
</dbReference>
<dbReference type="PDB" id="7OIX">
    <property type="method" value="EM"/>
    <property type="resolution" value="3.60 A"/>
    <property type="chains" value="A=1-538"/>
</dbReference>
<dbReference type="PDBsum" id="1Y4M"/>
<dbReference type="PDBsum" id="6RX3"/>
<dbReference type="PDBsum" id="7OIX"/>
<dbReference type="EMDB" id="EMD-12935"/>
<dbReference type="SMR" id="P60508"/>
<dbReference type="BioGRID" id="135715">
    <property type="interactions" value="15"/>
</dbReference>
<dbReference type="FunCoup" id="P60508">
    <property type="interactions" value="3"/>
</dbReference>
<dbReference type="IntAct" id="P60508">
    <property type="interactions" value="22"/>
</dbReference>
<dbReference type="MINT" id="P60508"/>
<dbReference type="STRING" id="9606.ENSP00000420174"/>
<dbReference type="TCDB" id="1.G.9.1.2">
    <property type="family name" value="the syncytin (syncytin) family"/>
</dbReference>
<dbReference type="GlyCosmos" id="P60508">
    <property type="glycosylation" value="9 sites, No reported glycans"/>
</dbReference>
<dbReference type="GlyGen" id="P60508">
    <property type="glycosylation" value="11 sites"/>
</dbReference>
<dbReference type="iPTMnet" id="P60508"/>
<dbReference type="PhosphoSitePlus" id="P60508"/>
<dbReference type="BioMuta" id="ERVFRD-1"/>
<dbReference type="DMDM" id="44887864"/>
<dbReference type="MassIVE" id="P60508"/>
<dbReference type="PaxDb" id="9606-ENSP00000420174"/>
<dbReference type="PeptideAtlas" id="P60508"/>
<dbReference type="ProteomicsDB" id="57211"/>
<dbReference type="TopDownProteomics" id="P60508"/>
<dbReference type="Antibodypedia" id="24880">
    <property type="antibodies" value="164 antibodies from 21 providers"/>
</dbReference>
<dbReference type="DNASU" id="405754"/>
<dbReference type="Ensembl" id="ENST00000472091.2">
    <property type="protein sequence ID" value="ENSP00000420174.1"/>
    <property type="gene ID" value="ENSG00000244476.4"/>
</dbReference>
<dbReference type="GeneID" id="405754"/>
<dbReference type="KEGG" id="hsa:405754"/>
<dbReference type="MANE-Select" id="ENST00000472091.2">
    <property type="protein sequence ID" value="ENSP00000420174.1"/>
    <property type="RefSeq nucleotide sequence ID" value="NM_207582.3"/>
    <property type="RefSeq protein sequence ID" value="NP_997465.1"/>
</dbReference>
<dbReference type="UCSC" id="uc003mzt.4">
    <property type="organism name" value="human"/>
</dbReference>
<dbReference type="AGR" id="HGNC:33823"/>
<dbReference type="CTD" id="405754"/>
<dbReference type="DisGeNET" id="405754"/>
<dbReference type="GeneCards" id="ERVFRD-1"/>
<dbReference type="HGNC" id="HGNC:33823">
    <property type="gene designation" value="ERVFRD-1"/>
</dbReference>
<dbReference type="HPA" id="ENSG00000244476">
    <property type="expression patterns" value="Tissue enriched (placenta)"/>
</dbReference>
<dbReference type="MIM" id="610524">
    <property type="type" value="gene"/>
</dbReference>
<dbReference type="neXtProt" id="NX_P60508"/>
<dbReference type="OpenTargets" id="ENSG00000244476"/>
<dbReference type="VEuPathDB" id="HostDB:ENSG00000244476"/>
<dbReference type="eggNOG" id="ENOG502SD08">
    <property type="taxonomic scope" value="Eukaryota"/>
</dbReference>
<dbReference type="GeneTree" id="ENSGT00940000163436"/>
<dbReference type="HOGENOM" id="CLU_506176_0_0_1"/>
<dbReference type="InParanoid" id="P60508"/>
<dbReference type="OMA" id="TRFCQGR"/>
<dbReference type="OrthoDB" id="9838482at2759"/>
<dbReference type="PAN-GO" id="P60508">
    <property type="GO annotations" value="1 GO annotation based on evolutionary models"/>
</dbReference>
<dbReference type="PhylomeDB" id="P60508"/>
<dbReference type="TreeFam" id="TF332233"/>
<dbReference type="PathwayCommons" id="P60508"/>
<dbReference type="SignaLink" id="P60508"/>
<dbReference type="BioGRID-ORCS" id="405754">
    <property type="hits" value="12 hits in 1096 CRISPR screens"/>
</dbReference>
<dbReference type="ChiTaRS" id="ERVFRD-1">
    <property type="organism name" value="human"/>
</dbReference>
<dbReference type="EvolutionaryTrace" id="P60508"/>
<dbReference type="GeneWiki" id="HERV-FRD"/>
<dbReference type="GenomeRNAi" id="405754"/>
<dbReference type="Pharos" id="P60508">
    <property type="development level" value="Tbio"/>
</dbReference>
<dbReference type="PRO" id="PR:P60508"/>
<dbReference type="Proteomes" id="UP000005640">
    <property type="component" value="Chromosome 6"/>
</dbReference>
<dbReference type="RNAct" id="P60508">
    <property type="molecule type" value="protein"/>
</dbReference>
<dbReference type="Bgee" id="ENSG00000244476">
    <property type="expression patterns" value="Expressed in placenta and 56 other cell types or tissues"/>
</dbReference>
<dbReference type="GO" id="GO:0005886">
    <property type="term" value="C:plasma membrane"/>
    <property type="evidence" value="ECO:0007669"/>
    <property type="project" value="UniProtKB-SubCell"/>
</dbReference>
<dbReference type="GO" id="GO:0007520">
    <property type="term" value="P:myoblast fusion"/>
    <property type="evidence" value="ECO:0000315"/>
    <property type="project" value="MGI"/>
</dbReference>
<dbReference type="GO" id="GO:0006949">
    <property type="term" value="P:syncytium formation"/>
    <property type="evidence" value="ECO:0000314"/>
    <property type="project" value="UniProtKB"/>
</dbReference>
<dbReference type="GO" id="GO:0000768">
    <property type="term" value="P:syncytium formation by plasma membrane fusion"/>
    <property type="evidence" value="ECO:0000314"/>
    <property type="project" value="UniProtKB"/>
</dbReference>
<dbReference type="CDD" id="cd09851">
    <property type="entry name" value="HTLV-1-like_HR1-HR2"/>
    <property type="match status" value="1"/>
</dbReference>
<dbReference type="FunFam" id="1.10.287.210:FF:000002">
    <property type="entry name" value="Syncytin-2"/>
    <property type="match status" value="1"/>
</dbReference>
<dbReference type="Gene3D" id="1.10.287.210">
    <property type="match status" value="1"/>
</dbReference>
<dbReference type="InterPro" id="IPR018154">
    <property type="entry name" value="TLV/ENV_coat_polyprotein"/>
</dbReference>
<dbReference type="PANTHER" id="PTHR10424:SF85">
    <property type="entry name" value="SYNCYTIN-2"/>
    <property type="match status" value="1"/>
</dbReference>
<dbReference type="PANTHER" id="PTHR10424">
    <property type="entry name" value="VIRAL ENVELOPE PROTEIN"/>
    <property type="match status" value="1"/>
</dbReference>
<dbReference type="Pfam" id="PF00429">
    <property type="entry name" value="TLV_coat"/>
    <property type="match status" value="1"/>
</dbReference>
<dbReference type="SUPFAM" id="SSF58069">
    <property type="entry name" value="Virus ectodomain"/>
    <property type="match status" value="1"/>
</dbReference>
<accession>P60508</accession>
<sequence>MGLLLLVLILTPSLAAYRHPDFPLLEKAQQLLQSTGSPYSTNCWLCTSSSTETPGTAYPASPREWTSIEAELHISYRWDPNLKGLMRPANSLLSTVKQDFPDIRQKPPIFGPIFTNINLMGIAPICVMAKRKNGTNVGTLPSTVCNVTFTVDSNQQTYQTYTHNQFRHQPRFPKPPNITFPQGTLLDKSSRFCQGRPSSCSTRNFWFRPADYNQCLQISNLSSTAEWVLLDQTRNSLFWENKTKGANQSQTPCVQVLAGMTIATSYLGISAVSEFFGTSLTPLFHFHISTCLKTQGAFYICGQSIHQCLPSNWTGTCTIGYVTPDIFIAPGNLSLPIPIYGNSPLPRVRRAIHFIPLLAGLGILAGTGTGIAGITKASLTYSQLSKEIANNIDTMAKALTTMQEQIDSLAAVVLQNRRGLDMLTAAQGGICLALDEKCCFWVNQSGKVQDNIRQLLNQASSLRERATQGWLNWEGTWKWFSWVLPLTGPLVSLLLLLLFGPCLLNLITQFVSSRLQAIKLQTNLSAGRHPRNIQESPF</sequence>
<protein>
    <recommendedName>
        <fullName>Syncytin-2</fullName>
    </recommendedName>
    <alternativeName>
        <fullName>Endogenous retrovirus group FRD member 1</fullName>
    </alternativeName>
    <alternativeName>
        <fullName>Envelope polyprotein</fullName>
    </alternativeName>
    <alternativeName>
        <fullName>HERV-FRD</fullName>
    </alternativeName>
    <alternativeName>
        <fullName>HERV-FRD_6p24.1 provirus ancestral Env polyprotein</fullName>
    </alternativeName>
    <component>
        <recommendedName>
            <fullName>Surface protein</fullName>
            <shortName>SU</shortName>
        </recommendedName>
    </component>
    <component>
        <recommendedName>
            <fullName>Transmembrane protein</fullName>
            <shortName>TM</shortName>
        </recommendedName>
    </component>
</protein>
<reference key="1">
    <citation type="journal article" date="2003" name="Genome Res.">
        <title>The secreted protein discovery initiative (SPDI), a large-scale effort to identify novel human secreted and transmembrane proteins: a bioinformatics assessment.</title>
        <authorList>
            <person name="Clark H.F."/>
            <person name="Gurney A.L."/>
            <person name="Abaya E."/>
            <person name="Baker K."/>
            <person name="Baldwin D.T."/>
            <person name="Brush J."/>
            <person name="Chen J."/>
            <person name="Chow B."/>
            <person name="Chui C."/>
            <person name="Crowley C."/>
            <person name="Currell B."/>
            <person name="Deuel B."/>
            <person name="Dowd P."/>
            <person name="Eaton D."/>
            <person name="Foster J.S."/>
            <person name="Grimaldi C."/>
            <person name="Gu Q."/>
            <person name="Hass P.E."/>
            <person name="Heldens S."/>
            <person name="Huang A."/>
            <person name="Kim H.S."/>
            <person name="Klimowski L."/>
            <person name="Jin Y."/>
            <person name="Johnson S."/>
            <person name="Lee J."/>
            <person name="Lewis L."/>
            <person name="Liao D."/>
            <person name="Mark M.R."/>
            <person name="Robbie E."/>
            <person name="Sanchez C."/>
            <person name="Schoenfeld J."/>
            <person name="Seshagiri S."/>
            <person name="Simmons L."/>
            <person name="Singh J."/>
            <person name="Smith V."/>
            <person name="Stinson J."/>
            <person name="Vagts A."/>
            <person name="Vandlen R.L."/>
            <person name="Watanabe C."/>
            <person name="Wieand D."/>
            <person name="Woods K."/>
            <person name="Xie M.-H."/>
            <person name="Yansura D.G."/>
            <person name="Yi S."/>
            <person name="Yu G."/>
            <person name="Yuan J."/>
            <person name="Zhang M."/>
            <person name="Zhang Z."/>
            <person name="Goddard A.D."/>
            <person name="Wood W.I."/>
            <person name="Godowski P.J."/>
            <person name="Gray A.M."/>
        </authorList>
    </citation>
    <scope>NUCLEOTIDE SEQUENCE [LARGE SCALE MRNA]</scope>
</reference>
<reference key="2">
    <citation type="journal article" date="2004" name="Nat. Genet.">
        <title>Complete sequencing and characterization of 21,243 full-length human cDNAs.</title>
        <authorList>
            <person name="Ota T."/>
            <person name="Suzuki Y."/>
            <person name="Nishikawa T."/>
            <person name="Otsuki T."/>
            <person name="Sugiyama T."/>
            <person name="Irie R."/>
            <person name="Wakamatsu A."/>
            <person name="Hayashi K."/>
            <person name="Sato H."/>
            <person name="Nagai K."/>
            <person name="Kimura K."/>
            <person name="Makita H."/>
            <person name="Sekine M."/>
            <person name="Obayashi M."/>
            <person name="Nishi T."/>
            <person name="Shibahara T."/>
            <person name="Tanaka T."/>
            <person name="Ishii S."/>
            <person name="Yamamoto J."/>
            <person name="Saito K."/>
            <person name="Kawai Y."/>
            <person name="Isono Y."/>
            <person name="Nakamura Y."/>
            <person name="Nagahari K."/>
            <person name="Murakami K."/>
            <person name="Yasuda T."/>
            <person name="Iwayanagi T."/>
            <person name="Wagatsuma M."/>
            <person name="Shiratori A."/>
            <person name="Sudo H."/>
            <person name="Hosoiri T."/>
            <person name="Kaku Y."/>
            <person name="Kodaira H."/>
            <person name="Kondo H."/>
            <person name="Sugawara M."/>
            <person name="Takahashi M."/>
            <person name="Kanda K."/>
            <person name="Yokoi T."/>
            <person name="Furuya T."/>
            <person name="Kikkawa E."/>
            <person name="Omura Y."/>
            <person name="Abe K."/>
            <person name="Kamihara K."/>
            <person name="Katsuta N."/>
            <person name="Sato K."/>
            <person name="Tanikawa M."/>
            <person name="Yamazaki M."/>
            <person name="Ninomiya K."/>
            <person name="Ishibashi T."/>
            <person name="Yamashita H."/>
            <person name="Murakawa K."/>
            <person name="Fujimori K."/>
            <person name="Tanai H."/>
            <person name="Kimata M."/>
            <person name="Watanabe M."/>
            <person name="Hiraoka S."/>
            <person name="Chiba Y."/>
            <person name="Ishida S."/>
            <person name="Ono Y."/>
            <person name="Takiguchi S."/>
            <person name="Watanabe S."/>
            <person name="Yosida M."/>
            <person name="Hotuta T."/>
            <person name="Kusano J."/>
            <person name="Kanehori K."/>
            <person name="Takahashi-Fujii A."/>
            <person name="Hara H."/>
            <person name="Tanase T.-O."/>
            <person name="Nomura Y."/>
            <person name="Togiya S."/>
            <person name="Komai F."/>
            <person name="Hara R."/>
            <person name="Takeuchi K."/>
            <person name="Arita M."/>
            <person name="Imose N."/>
            <person name="Musashino K."/>
            <person name="Yuuki H."/>
            <person name="Oshima A."/>
            <person name="Sasaki N."/>
            <person name="Aotsuka S."/>
            <person name="Yoshikawa Y."/>
            <person name="Matsunawa H."/>
            <person name="Ichihara T."/>
            <person name="Shiohata N."/>
            <person name="Sano S."/>
            <person name="Moriya S."/>
            <person name="Momiyama H."/>
            <person name="Satoh N."/>
            <person name="Takami S."/>
            <person name="Terashima Y."/>
            <person name="Suzuki O."/>
            <person name="Nakagawa S."/>
            <person name="Senoh A."/>
            <person name="Mizoguchi H."/>
            <person name="Goto Y."/>
            <person name="Shimizu F."/>
            <person name="Wakebe H."/>
            <person name="Hishigaki H."/>
            <person name="Watanabe T."/>
            <person name="Sugiyama A."/>
            <person name="Takemoto M."/>
            <person name="Kawakami B."/>
            <person name="Yamazaki M."/>
            <person name="Watanabe K."/>
            <person name="Kumagai A."/>
            <person name="Itakura S."/>
            <person name="Fukuzumi Y."/>
            <person name="Fujimori Y."/>
            <person name="Komiyama M."/>
            <person name="Tashiro H."/>
            <person name="Tanigami A."/>
            <person name="Fujiwara T."/>
            <person name="Ono T."/>
            <person name="Yamada K."/>
            <person name="Fujii Y."/>
            <person name="Ozaki K."/>
            <person name="Hirao M."/>
            <person name="Ohmori Y."/>
            <person name="Kawabata A."/>
            <person name="Hikiji T."/>
            <person name="Kobatake N."/>
            <person name="Inagaki H."/>
            <person name="Ikema Y."/>
            <person name="Okamoto S."/>
            <person name="Okitani R."/>
            <person name="Kawakami T."/>
            <person name="Noguchi S."/>
            <person name="Itoh T."/>
            <person name="Shigeta K."/>
            <person name="Senba T."/>
            <person name="Matsumura K."/>
            <person name="Nakajima Y."/>
            <person name="Mizuno T."/>
            <person name="Morinaga M."/>
            <person name="Sasaki M."/>
            <person name="Togashi T."/>
            <person name="Oyama M."/>
            <person name="Hata H."/>
            <person name="Watanabe M."/>
            <person name="Komatsu T."/>
            <person name="Mizushima-Sugano J."/>
            <person name="Satoh T."/>
            <person name="Shirai Y."/>
            <person name="Takahashi Y."/>
            <person name="Nakagawa K."/>
            <person name="Okumura K."/>
            <person name="Nagase T."/>
            <person name="Nomura N."/>
            <person name="Kikuchi H."/>
            <person name="Masuho Y."/>
            <person name="Yamashita R."/>
            <person name="Nakai K."/>
            <person name="Yada T."/>
            <person name="Nakamura Y."/>
            <person name="Ohara O."/>
            <person name="Isogai T."/>
            <person name="Sugano S."/>
        </authorList>
    </citation>
    <scope>NUCLEOTIDE SEQUENCE [LARGE SCALE MRNA]</scope>
    <source>
        <tissue>Placenta</tissue>
    </source>
</reference>
<reference key="3">
    <citation type="journal article" date="2003" name="Nature">
        <title>The DNA sequence and analysis of human chromosome 6.</title>
        <authorList>
            <person name="Mungall A.J."/>
            <person name="Palmer S.A."/>
            <person name="Sims S.K."/>
            <person name="Edwards C.A."/>
            <person name="Ashurst J.L."/>
            <person name="Wilming L."/>
            <person name="Jones M.C."/>
            <person name="Horton R."/>
            <person name="Hunt S.E."/>
            <person name="Scott C.E."/>
            <person name="Gilbert J.G.R."/>
            <person name="Clamp M.E."/>
            <person name="Bethel G."/>
            <person name="Milne S."/>
            <person name="Ainscough R."/>
            <person name="Almeida J.P."/>
            <person name="Ambrose K.D."/>
            <person name="Andrews T.D."/>
            <person name="Ashwell R.I.S."/>
            <person name="Babbage A.K."/>
            <person name="Bagguley C.L."/>
            <person name="Bailey J."/>
            <person name="Banerjee R."/>
            <person name="Barker D.J."/>
            <person name="Barlow K.F."/>
            <person name="Bates K."/>
            <person name="Beare D.M."/>
            <person name="Beasley H."/>
            <person name="Beasley O."/>
            <person name="Bird C.P."/>
            <person name="Blakey S.E."/>
            <person name="Bray-Allen S."/>
            <person name="Brook J."/>
            <person name="Brown A.J."/>
            <person name="Brown J.Y."/>
            <person name="Burford D.C."/>
            <person name="Burrill W."/>
            <person name="Burton J."/>
            <person name="Carder C."/>
            <person name="Carter N.P."/>
            <person name="Chapman J.C."/>
            <person name="Clark S.Y."/>
            <person name="Clark G."/>
            <person name="Clee C.M."/>
            <person name="Clegg S."/>
            <person name="Cobley V."/>
            <person name="Collier R.E."/>
            <person name="Collins J.E."/>
            <person name="Colman L.K."/>
            <person name="Corby N.R."/>
            <person name="Coville G.J."/>
            <person name="Culley K.M."/>
            <person name="Dhami P."/>
            <person name="Davies J."/>
            <person name="Dunn M."/>
            <person name="Earthrowl M.E."/>
            <person name="Ellington A.E."/>
            <person name="Evans K.A."/>
            <person name="Faulkner L."/>
            <person name="Francis M.D."/>
            <person name="Frankish A."/>
            <person name="Frankland J."/>
            <person name="French L."/>
            <person name="Garner P."/>
            <person name="Garnett J."/>
            <person name="Ghori M.J."/>
            <person name="Gilby L.M."/>
            <person name="Gillson C.J."/>
            <person name="Glithero R.J."/>
            <person name="Grafham D.V."/>
            <person name="Grant M."/>
            <person name="Gribble S."/>
            <person name="Griffiths C."/>
            <person name="Griffiths M.N.D."/>
            <person name="Hall R."/>
            <person name="Halls K.S."/>
            <person name="Hammond S."/>
            <person name="Harley J.L."/>
            <person name="Hart E.A."/>
            <person name="Heath P.D."/>
            <person name="Heathcott R."/>
            <person name="Holmes S.J."/>
            <person name="Howden P.J."/>
            <person name="Howe K.L."/>
            <person name="Howell G.R."/>
            <person name="Huckle E."/>
            <person name="Humphray S.J."/>
            <person name="Humphries M.D."/>
            <person name="Hunt A.R."/>
            <person name="Johnson C.M."/>
            <person name="Joy A.A."/>
            <person name="Kay M."/>
            <person name="Keenan S.J."/>
            <person name="Kimberley A.M."/>
            <person name="King A."/>
            <person name="Laird G.K."/>
            <person name="Langford C."/>
            <person name="Lawlor S."/>
            <person name="Leongamornlert D.A."/>
            <person name="Leversha M."/>
            <person name="Lloyd C.R."/>
            <person name="Lloyd D.M."/>
            <person name="Loveland J.E."/>
            <person name="Lovell J."/>
            <person name="Martin S."/>
            <person name="Mashreghi-Mohammadi M."/>
            <person name="Maslen G.L."/>
            <person name="Matthews L."/>
            <person name="McCann O.T."/>
            <person name="McLaren S.J."/>
            <person name="McLay K."/>
            <person name="McMurray A."/>
            <person name="Moore M.J.F."/>
            <person name="Mullikin J.C."/>
            <person name="Niblett D."/>
            <person name="Nickerson T."/>
            <person name="Novik K.L."/>
            <person name="Oliver K."/>
            <person name="Overton-Larty E.K."/>
            <person name="Parker A."/>
            <person name="Patel R."/>
            <person name="Pearce A.V."/>
            <person name="Peck A.I."/>
            <person name="Phillimore B.J.C.T."/>
            <person name="Phillips S."/>
            <person name="Plumb R.W."/>
            <person name="Porter K.M."/>
            <person name="Ramsey Y."/>
            <person name="Ranby S.A."/>
            <person name="Rice C.M."/>
            <person name="Ross M.T."/>
            <person name="Searle S.M."/>
            <person name="Sehra H.K."/>
            <person name="Sheridan E."/>
            <person name="Skuce C.D."/>
            <person name="Smith S."/>
            <person name="Smith M."/>
            <person name="Spraggon L."/>
            <person name="Squares S.L."/>
            <person name="Steward C.A."/>
            <person name="Sycamore N."/>
            <person name="Tamlyn-Hall G."/>
            <person name="Tester J."/>
            <person name="Theaker A.J."/>
            <person name="Thomas D.W."/>
            <person name="Thorpe A."/>
            <person name="Tracey A."/>
            <person name="Tromans A."/>
            <person name="Tubby B."/>
            <person name="Wall M."/>
            <person name="Wallis J.M."/>
            <person name="West A.P."/>
            <person name="White S.S."/>
            <person name="Whitehead S.L."/>
            <person name="Whittaker H."/>
            <person name="Wild A."/>
            <person name="Willey D.J."/>
            <person name="Wilmer T.E."/>
            <person name="Wood J.M."/>
            <person name="Wray P.W."/>
            <person name="Wyatt J.C."/>
            <person name="Young L."/>
            <person name="Younger R.M."/>
            <person name="Bentley D.R."/>
            <person name="Coulson A."/>
            <person name="Durbin R.M."/>
            <person name="Hubbard T."/>
            <person name="Sulston J.E."/>
            <person name="Dunham I."/>
            <person name="Rogers J."/>
            <person name="Beck S."/>
        </authorList>
    </citation>
    <scope>NUCLEOTIDE SEQUENCE [LARGE SCALE GENOMIC DNA]</scope>
</reference>
<reference key="4">
    <citation type="journal article" date="2004" name="Genome Res.">
        <title>The status, quality, and expansion of the NIH full-length cDNA project: the Mammalian Gene Collection (MGC).</title>
        <authorList>
            <consortium name="The MGC Project Team"/>
        </authorList>
    </citation>
    <scope>NUCLEOTIDE SEQUENCE [LARGE SCALE MRNA]</scope>
    <source>
        <tissue>Placenta</tissue>
    </source>
</reference>
<reference key="5">
    <citation type="journal article" date="2003" name="Proc. Natl. Acad. Sci. U.S.A.">
        <title>Genomewide screening for fusogenic human endogenous retrovirus envelopes identifies syncytin 2, a gene conserved on primate evolution.</title>
        <authorList>
            <person name="Blaise S."/>
            <person name="de Parseval N."/>
            <person name="Benit L."/>
            <person name="Heidmann T."/>
        </authorList>
    </citation>
    <scope>FUNCTION</scope>
</reference>
<reference key="6">
    <citation type="journal article" date="2004" name="J. Virol.">
        <title>Identification of an envelope protein from the FRD family of human endogenous retroviruses (HERV-FRD) conferring infectivity and functional conservation among simians.</title>
        <authorList>
            <person name="Blaise S."/>
            <person name="Ruggieri A."/>
            <person name="Dewannieux M."/>
            <person name="Cosset F.-L."/>
            <person name="Heidmann T."/>
        </authorList>
    </citation>
    <scope>FUNCTION</scope>
</reference>
<reference key="7">
    <citation type="journal article" date="2003" name="J. Virol.">
        <title>Survey of human genes of retroviral origin: identification and transcriptome of the genes with coding capacity for complete envelope proteins.</title>
        <authorList>
            <person name="de Parseval N."/>
            <person name="Lazar V."/>
            <person name="Casella J.-F."/>
            <person name="Benit L."/>
            <person name="Heidmann T."/>
        </authorList>
    </citation>
    <scope>TISSUE SPECIFICITY</scope>
</reference>
<reference key="8">
    <citation type="journal article" date="2008" name="Proc. Natl. Acad. Sci. U.S.A.">
        <title>A placenta-specific receptor for the fusogenic, endogenous retrovirus-derived, human syncytin-2.</title>
        <authorList>
            <person name="Esnault C."/>
            <person name="Priet S."/>
            <person name="Ribet D."/>
            <person name="Vernochet C."/>
            <person name="Bruls T."/>
            <person name="Lavialle C."/>
            <person name="Weissenbach J."/>
            <person name="Heidmann T."/>
        </authorList>
    </citation>
    <scope>FUNCTION</scope>
    <scope>INTERACTION WITH MFSD2A</scope>
</reference>
<reference key="9">
    <citation type="journal article" date="2013" name="Sci. Rep.">
        <title>A novel human endogenous retroviral protein inhibits cell-cell fusion.</title>
        <authorList>
            <person name="Sugimoto J."/>
            <person name="Sugimoto M."/>
            <person name="Bernstein H."/>
            <person name="Jinno Y."/>
            <person name="Schust D."/>
        </authorList>
    </citation>
    <scope>FUNCTION</scope>
</reference>
<reference key="10">
    <citation type="journal article" date="2005" name="J. Mol. Biol.">
        <title>Crystal structure of a pivotal domain of human syncytin-2, a 40 million years old endogenous retrovirus fusogenic envelope gene captured by primates.</title>
        <authorList>
            <person name="Renard M."/>
            <person name="Varela P.F."/>
            <person name="Letzelter C."/>
            <person name="Duquerroy S."/>
            <person name="Rey F.A."/>
            <person name="Heidmann T."/>
        </authorList>
    </citation>
    <scope>X-RAY CRYSTALLOGRAPHY (1.6 ANGSTROMS) OF 391-443</scope>
    <scope>DISULFIDE BOND</scope>
</reference>
<organism>
    <name type="scientific">Homo sapiens</name>
    <name type="common">Human</name>
    <dbReference type="NCBI Taxonomy" id="9606"/>
    <lineage>
        <taxon>Eukaryota</taxon>
        <taxon>Metazoa</taxon>
        <taxon>Chordata</taxon>
        <taxon>Craniata</taxon>
        <taxon>Vertebrata</taxon>
        <taxon>Euteleostomi</taxon>
        <taxon>Mammalia</taxon>
        <taxon>Eutheria</taxon>
        <taxon>Euarchontoglires</taxon>
        <taxon>Primates</taxon>
        <taxon>Haplorrhini</taxon>
        <taxon>Catarrhini</taxon>
        <taxon>Hominidae</taxon>
        <taxon>Homo</taxon>
    </lineage>
</organism>
<keyword id="KW-0002">3D-structure</keyword>
<keyword id="KW-1003">Cell membrane</keyword>
<keyword id="KW-0165">Cleavage on pair of basic residues</keyword>
<keyword id="KW-1015">Disulfide bond</keyword>
<keyword id="KW-0895">ERV</keyword>
<keyword id="KW-0325">Glycoprotein</keyword>
<keyword id="KW-0472">Membrane</keyword>
<keyword id="KW-1267">Proteomics identification</keyword>
<keyword id="KW-1185">Reference proteome</keyword>
<keyword id="KW-0732">Signal</keyword>
<keyword id="KW-0812">Transmembrane</keyword>
<keyword id="KW-1133">Transmembrane helix</keyword>
<keyword id="KW-0814">Transposable element</keyword>
<keyword id="KW-0261">Viral envelope protein</keyword>
<keyword id="KW-0946">Virion</keyword>
<feature type="signal peptide" evidence="4">
    <location>
        <begin position="1"/>
        <end position="15"/>
    </location>
</feature>
<feature type="chain" id="PRO_0000008439" description="Syncytin-2">
    <location>
        <begin position="16"/>
        <end position="538"/>
    </location>
</feature>
<feature type="chain" id="PRO_0000008440" description="Surface protein" evidence="1">
    <location>
        <begin position="16"/>
        <end position="350"/>
    </location>
</feature>
<feature type="chain" id="PRO_0000008441" description="Transmembrane protein" evidence="1">
    <location>
        <begin position="351"/>
        <end position="538"/>
    </location>
</feature>
<feature type="topological domain" description="Extracellular" evidence="4">
    <location>
        <begin position="16"/>
        <end position="478"/>
    </location>
</feature>
<feature type="transmembrane region" description="Helical" evidence="4">
    <location>
        <begin position="479"/>
        <end position="499"/>
    </location>
</feature>
<feature type="topological domain" description="Cytoplasmic" evidence="4">
    <location>
        <begin position="500"/>
        <end position="538"/>
    </location>
</feature>
<feature type="region of interest" description="Fusion peptide" evidence="1">
    <location>
        <begin position="354"/>
        <end position="374"/>
    </location>
</feature>
<feature type="short sequence motif" description="CXXC" evidence="9">
    <location>
        <begin position="43"/>
        <end position="46"/>
    </location>
</feature>
<feature type="short sequence motif" description="CKS-17" evidence="1">
    <location>
        <begin position="414"/>
        <end position="430"/>
    </location>
</feature>
<feature type="short sequence motif" description="CX6CC" evidence="9">
    <location>
        <begin position="431"/>
        <end position="439"/>
    </location>
</feature>
<feature type="site" description="Cleavage" evidence="3">
    <location>
        <begin position="350"/>
        <end position="351"/>
    </location>
</feature>
<feature type="glycosylation site" description="N-linked (GlcNAc...) asparagine" evidence="4">
    <location>
        <position position="133"/>
    </location>
</feature>
<feature type="glycosylation site" description="N-linked (GlcNAc...) asparagine" evidence="4">
    <location>
        <position position="146"/>
    </location>
</feature>
<feature type="glycosylation site" description="N-linked (GlcNAc...) asparagine" evidence="4">
    <location>
        <position position="177"/>
    </location>
</feature>
<feature type="glycosylation site" description="N-linked (GlcNAc...) asparagine" evidence="4">
    <location>
        <position position="220"/>
    </location>
</feature>
<feature type="glycosylation site" description="N-linked (GlcNAc...) asparagine" evidence="4">
    <location>
        <position position="241"/>
    </location>
</feature>
<feature type="glycosylation site" description="N-linked (GlcNAc...) asparagine" evidence="4">
    <location>
        <position position="247"/>
    </location>
</feature>
<feature type="glycosylation site" description="N-linked (GlcNAc...) asparagine" evidence="4">
    <location>
        <position position="312"/>
    </location>
</feature>
<feature type="glycosylation site" description="N-linked (GlcNAc...) asparagine" evidence="4">
    <location>
        <position position="332"/>
    </location>
</feature>
<feature type="glycosylation site" description="N-linked (GlcNAc...) asparagine" evidence="4">
    <location>
        <position position="443"/>
    </location>
</feature>
<feature type="disulfide bond" description="Interchain (between SU and TM chains, or C-46 with C-439); in linked form" evidence="3">
    <location>
        <begin position="43"/>
        <end position="439"/>
    </location>
</feature>
<feature type="disulfide bond" evidence="2">
    <location>
        <begin position="43"/>
        <end position="46"/>
    </location>
</feature>
<feature type="disulfide bond" evidence="7">
    <location>
        <begin position="431"/>
        <end position="438"/>
    </location>
</feature>
<feature type="helix" evidence="11">
    <location>
        <begin position="375"/>
        <end position="379"/>
    </location>
</feature>
<feature type="helix" evidence="10">
    <location>
        <begin position="395"/>
        <end position="423"/>
    </location>
</feature>
<feature type="helix" evidence="10">
    <location>
        <begin position="425"/>
        <end position="427"/>
    </location>
</feature>
<feature type="helix" evidence="10">
    <location>
        <begin position="430"/>
        <end position="433"/>
    </location>
</feature>
<feature type="helix" evidence="11">
    <location>
        <begin position="445"/>
        <end position="467"/>
    </location>
</feature>
<comment type="function">
    <text evidence="8">This endogenous retroviral envelope protein has retained its original fusogenic properties and participates in trophoblast fusion and the formation of a syncytium during placenta morphogenesis. The interaction with MFSD2A is apparently important for this process (PubMed:18988732).</text>
</comment>
<comment type="function">
    <text evidence="6">Endogenous envelope proteins may have kept, lost or modified their original function during evolution but this one can still make pseudotypes with MLV, HIV-1 or SIV-1 virions and confer infectivity. Retroviral envelope proteins mediate receptor recognition and membrane fusion during early infection. The surface protein mediates receptor recognition, while the transmembrane protein anchors the envelope heterodimer to the viral membrane through one transmembrane domain. The other hydrophobic domain, called fusion peptide, mediates fusion of the viral membrane with the target cell membrane (PubMed:14694139).</text>
</comment>
<comment type="subunit">
    <text evidence="1 8">The surface and transmembrane proteins form a heterodimer. They are attached by non-covalent interactions or by a labile interchain disulfide bond (By similarity). Interacts with MFSD2A.</text>
</comment>
<comment type="interaction">
    <interactant intactId="EBI-17973325">
        <id>P60508</id>
    </interactant>
    <interactant intactId="EBI-707714">
        <id>Q92843</id>
        <label>BCL2L2</label>
    </interactant>
    <organismsDiffer>false</organismsDiffer>
    <experiments>3</experiments>
</comment>
<comment type="interaction">
    <interactant intactId="EBI-17973325">
        <id>P60508</id>
    </interactant>
    <interactant intactId="EBI-9686780">
        <id>Q06432</id>
        <label>CACNG1</label>
    </interactant>
    <organismsDiffer>false</organismsDiffer>
    <experiments>3</experiments>
</comment>
<comment type="interaction">
    <interactant intactId="EBI-17973325">
        <id>P60508</id>
    </interactant>
    <interactant intactId="EBI-10271156">
        <id>Q8NHW4</id>
        <label>CCL4L2</label>
    </interactant>
    <organismsDiffer>false</organismsDiffer>
    <experiments>3</experiments>
</comment>
<comment type="interaction">
    <interactant intactId="EBI-17973325">
        <id>P60508</id>
    </interactant>
    <interactant intactId="EBI-2339219">
        <id>Q08426</id>
        <label>EHHADH</label>
    </interactant>
    <organismsDiffer>false</organismsDiffer>
    <experiments>3</experiments>
</comment>
<comment type="interaction">
    <interactant intactId="EBI-17973325">
        <id>P60508</id>
    </interactant>
    <interactant intactId="EBI-10976398">
        <id>Q7Z2K6</id>
        <label>ERMP1</label>
    </interactant>
    <organismsDiffer>false</organismsDiffer>
    <experiments>3</experiments>
</comment>
<comment type="interaction">
    <interactant intactId="EBI-17973325">
        <id>P60508</id>
    </interactant>
    <interactant intactId="EBI-2876774">
        <id>Q92520</id>
        <label>FAM3C</label>
    </interactant>
    <organismsDiffer>false</organismsDiffer>
    <experiments>3</experiments>
</comment>
<comment type="interaction">
    <interactant intactId="EBI-17973325">
        <id>P60508</id>
    </interactant>
    <interactant intactId="EBI-11991950">
        <id>Q8WWP7</id>
        <label>GIMAP1</label>
    </interactant>
    <organismsDiffer>false</organismsDiffer>
    <experiments>3</experiments>
</comment>
<comment type="interaction">
    <interactant intactId="EBI-17973325">
        <id>P60508</id>
    </interactant>
    <interactant intactId="EBI-11659720">
        <id>Q86YW7</id>
        <label>GPHB5</label>
    </interactant>
    <organismsDiffer>false</organismsDiffer>
    <experiments>3</experiments>
</comment>
<comment type="interaction">
    <interactant intactId="EBI-17973325">
        <id>P60508</id>
    </interactant>
    <interactant intactId="EBI-8449636">
        <id>P30301</id>
        <label>MIP</label>
    </interactant>
    <organismsDiffer>false</organismsDiffer>
    <experiments>3</experiments>
</comment>
<comment type="interaction">
    <interactant intactId="EBI-17973325">
        <id>P60508</id>
    </interactant>
    <interactant intactId="EBI-10317425">
        <id>Q9NZG7</id>
        <label>NINJ2</label>
    </interactant>
    <organismsDiffer>false</organismsDiffer>
    <experiments>3</experiments>
</comment>
<comment type="interaction">
    <interactant intactId="EBI-17973325">
        <id>P60508</id>
    </interactant>
    <interactant intactId="EBI-17973370">
        <id>Q969Y0</id>
        <label>NXPE3</label>
    </interactant>
    <organismsDiffer>false</organismsDiffer>
    <experiments>3</experiments>
</comment>
<comment type="interaction">
    <interactant intactId="EBI-17973325">
        <id>P60508</id>
    </interactant>
    <interactant intactId="EBI-465167">
        <id>P09466</id>
        <label>PAEP</label>
    </interactant>
    <organismsDiffer>false</organismsDiffer>
    <experiments>3</experiments>
</comment>
<comment type="interaction">
    <interactant intactId="EBI-17973325">
        <id>P60508</id>
    </interactant>
    <interactant intactId="EBI-2845982">
        <id>Q01453</id>
        <label>PMP22</label>
    </interactant>
    <organismsDiffer>false</organismsDiffer>
    <experiments>3</experiments>
</comment>
<comment type="interaction">
    <interactant intactId="EBI-17973325">
        <id>P60508</id>
    </interactant>
    <interactant intactId="EBI-8652744">
        <id>Q96IW7</id>
        <label>SEC22A</label>
    </interactant>
    <organismsDiffer>false</organismsDiffer>
    <experiments>3</experiments>
</comment>
<comment type="interaction">
    <interactant intactId="EBI-17973325">
        <id>P60508</id>
    </interactant>
    <interactant intactId="EBI-10262251">
        <id>Q8IWU4</id>
        <label>SLC30A8</label>
    </interactant>
    <organismsDiffer>false</organismsDiffer>
    <experiments>3</experiments>
</comment>
<comment type="interaction">
    <interactant intactId="EBI-17973325">
        <id>P60508</id>
    </interactant>
    <interactant intactId="EBI-10290130">
        <id>Q96JW4</id>
        <label>SLC41A2</label>
    </interactant>
    <organismsDiffer>false</organismsDiffer>
    <experiments>3</experiments>
</comment>
<comment type="interaction">
    <interactant intactId="EBI-17973325">
        <id>P60508</id>
    </interactant>
    <interactant intactId="EBI-747259">
        <id>Q03518</id>
        <label>TAP1</label>
    </interactant>
    <organismsDiffer>false</organismsDiffer>
    <experiments>3</experiments>
</comment>
<comment type="interaction">
    <interactant intactId="EBI-17973325">
        <id>P60508</id>
    </interactant>
    <interactant intactId="EBI-2852148">
        <id>Q9H2L4</id>
        <label>TMEM60</label>
    </interactant>
    <organismsDiffer>false</organismsDiffer>
    <experiments>3</experiments>
</comment>
<comment type="interaction">
    <interactant intactId="EBI-17973325">
        <id>P60508</id>
    </interactant>
    <interactant intactId="EBI-10313040">
        <id>Q9NRS4</id>
        <label>TMPRSS4</label>
    </interactant>
    <organismsDiffer>false</organismsDiffer>
    <experiments>3</experiments>
</comment>
<comment type="interaction">
    <interactant intactId="EBI-17973325">
        <id>P60508</id>
    </interactant>
    <interactant intactId="EBI-10191195">
        <id>O95183</id>
        <label>VAMP5</label>
    </interactant>
    <organismsDiffer>false</organismsDiffer>
    <experiments>3</experiments>
</comment>
<comment type="subcellular location">
    <subcellularLocation>
        <location evidence="9">Virion</location>
    </subcellularLocation>
</comment>
<comment type="subcellular location">
    <molecule>Surface protein</molecule>
    <subcellularLocation>
        <location evidence="9">Cell membrane</location>
        <topology evidence="9">Peripheral membrane protein</topology>
    </subcellularLocation>
    <text evidence="3">The surface protein is not anchored to the membrane, but localizes to the extracellular surface through its binding to TM.</text>
</comment>
<comment type="subcellular location">
    <molecule>Transmembrane protein</molecule>
    <subcellularLocation>
        <location evidence="9">Cell membrane</location>
        <topology evidence="4">Single-pass membrane protein</topology>
    </subcellularLocation>
</comment>
<comment type="tissue specificity">
    <text evidence="5">Expressed at higher level in placenta. Expressed at lower level in adrenal, bone marrow, brain, breast, colon, kidney, lung, ovary, peripheral blood lymphocytes, prostate, skin, spleen, testis, thymus, thyroid, trachea.</text>
</comment>
<comment type="domain">
    <text evidence="1">Contains the CKS-17 immunosuppressive domain present in many retroviral envelope proteins. As a synthetic peptide, it inhibits immune function in vitro and in vivo (By similarity).</text>
</comment>
<comment type="PTM">
    <text evidence="1">Specific enzymatic cleavages in vivo yield the mature SU and TM proteins.</text>
</comment>
<comment type="PTM">
    <text evidence="1">The CXXC motif is highly conserved across a broad range of retroviral envelope proteins. It is thought to participate in the formation of a labile disulfide bond possibly with the CX6CC motif present in the transmembrane protein. Isomerization of the intersubunit disulfide bond to an SU intrachain disulfide bond is thought to occur upon receptor recognition in order to allow membrane fusion (By similarity).</text>
</comment>
<comment type="miscellaneous">
    <text>HERV-FRD subgenomic RNA has been observed.</text>
</comment>
<comment type="miscellaneous">
    <text>Ortholog in old-world and new-world monkeys, but not in prosimians.</text>
</comment>
<comment type="miscellaneous">
    <text>The human genome contains a high percentage of proviral-like elements, also called endogenous retroviruses (ERVs) that are the genomic traces of ancient infections of the germline by exogenous retroviruses. Although most of these elements are defective, some have conserved a functional envelope (env) gene, most probably diverted by the host for its benefit.</text>
</comment>
<comment type="similarity">
    <text evidence="9">Belongs to the gamma type-C retroviral envelope protein family. HERV class-I FRD env subfamily.</text>
</comment>
<comment type="caution">
    <text evidence="9">CKS-17 sequence does not match the minimal active consensus.</text>
</comment>
<gene>
    <name type="primary">ERVFRD-1</name>
    <name type="synonym">ERVFRDE1</name>
    <name type="ORF">UNQ6191/PRO20218</name>
</gene>
<evidence type="ECO:0000250" key="1"/>
<evidence type="ECO:0000250" key="2">
    <source>
        <dbReference type="UniProtKB" id="P23064"/>
    </source>
</evidence>
<evidence type="ECO:0000250" key="3">
    <source>
        <dbReference type="UniProtKB" id="Q9UQF0"/>
    </source>
</evidence>
<evidence type="ECO:0000255" key="4"/>
<evidence type="ECO:0000269" key="5">
    <source>
    </source>
</evidence>
<evidence type="ECO:0000269" key="6">
    <source>
    </source>
</evidence>
<evidence type="ECO:0000269" key="7">
    <source>
    </source>
</evidence>
<evidence type="ECO:0000269" key="8">
    <source>
    </source>
</evidence>
<evidence type="ECO:0000305" key="9"/>
<evidence type="ECO:0007829" key="10">
    <source>
        <dbReference type="PDB" id="1Y4M"/>
    </source>
</evidence>
<evidence type="ECO:0007829" key="11">
    <source>
        <dbReference type="PDB" id="6RX3"/>
    </source>
</evidence>
<name>SYCY2_HUMAN</name>